<reference key="1">
    <citation type="submission" date="2004-11" db="EMBL/GenBank/DDBJ databases">
        <authorList>
            <consortium name="The German cDNA consortium"/>
        </authorList>
    </citation>
    <scope>NUCLEOTIDE SEQUENCE [LARGE SCALE MRNA]</scope>
    <source>
        <tissue>Brain cortex</tissue>
    </source>
</reference>
<protein>
    <recommendedName>
        <fullName evidence="2">Dolichyl-diphosphooligosaccharide--protein glycosyltransferase 48 kDa subunit</fullName>
        <shortName>DDOST 48 kDa subunit</shortName>
        <shortName>Oligosaccharyl transferase 48 kDa subunit</shortName>
    </recommendedName>
</protein>
<comment type="function">
    <text evidence="2 3">Subunit of the oligosaccharyl transferase (OST) complex that catalyzes the initial transfer of a defined glycan (Glc(3)Man(9)GlcNAc(2) in eukaryotes) from the lipid carrier dolichol-pyrophosphate to an asparagine residue within an Asn-X-Ser/Thr consensus motif in nascent polypeptide chains, the first step in protein N-glycosylation (By similarity). N-glycosylation occurs cotranslationally and the complex associates with the Sec61 complex at the channel-forming translocon complex that mediates protein translocation across the endoplasmic reticulum (ER). All subunits are required for a maximal enzyme activity (By similarity). Required for the assembly of both SST3A- and SS3B-containing OST complexes (By similarity).</text>
</comment>
<comment type="pathway">
    <text evidence="2">Protein modification; protein glycosylation.</text>
</comment>
<comment type="subunit">
    <text evidence="2 3">Component of the oligosaccharyltransferase (OST) complex (By similarity). OST exists in two different complex forms which contain common core subunits RPN1, RPN2, OST48, OST4, DAD1 and TMEM258, either STT3A or STT3B as catalytic subunits, and form-specific accessory subunits (By similarity). STT3A complex assembly occurs through the formation of 3 subcomplexes. Subcomplex 1 contains RPN1 and TMEM258, subcomplex 2 contains the STT3A-specific subunits STT3A, DC2/OSTC, and KCP2 as well as the core subunit OST4, and subcomplex 3 contains RPN2, DAD1, and OST48. The STT3A complex can form stable complexes with the Sec61 complex or with both the Sec61 and TRAP complexes. Interacts with SMIM22 (By similarity).</text>
</comment>
<comment type="subcellular location">
    <subcellularLocation>
        <location evidence="4">Endoplasmic reticulum membrane</location>
        <topology evidence="4">Single-pass type I membrane protein</topology>
    </subcellularLocation>
</comment>
<comment type="similarity">
    <text evidence="6">Belongs to the DDOST 48 kDa subunit family.</text>
</comment>
<comment type="sequence caution" evidence="6">
    <conflict type="erroneous initiation">
        <sequence resource="EMBL-CDS" id="CAH93165"/>
    </conflict>
</comment>
<keyword id="KW-0256">Endoplasmic reticulum</keyword>
<keyword id="KW-0472">Membrane</keyword>
<keyword id="KW-1185">Reference proteome</keyword>
<keyword id="KW-0732">Signal</keyword>
<keyword id="KW-0812">Transmembrane</keyword>
<keyword id="KW-1133">Transmembrane helix</keyword>
<sequence>MEPSTAARAWALFWLLPPLLGAVCASGPRTLVLLDNLNVRETHSLFFRSLKDRGFELTFKTADDPSLSLIKYGEFLYDNLIIFSPSVEDFGGNINVETISAFIDGGGSVLVAASSDIGDPLRELGSECGIEFDEEKTAVIDHHNYDISDLGQHTLIVADTENLLKAPTIVGKSSLNPILFRGVGMVADPDNPLVLDILTGSSTSYSFFPDKPITQYPHAVGKNTLLIAGLQARNNARVIFSGSLDFFSDSFFNSAVQKAAPGSQRYSQTGNYELAVALSRWVFKEEGVLRVGPVSHHRVGETAPPNAYTVTDLVEYSIVIQQLSNGKWVPFDGDDIQLEFVRIDPFVRTFLKKKGGKYSVQFKLPDVYGVFQFKVDYNRLGYTHLYSSTQVSVRPLQHTQYERFIPSAYPYYASAFSMMLGLFIFSIVFLHMKEKEKSD</sequence>
<dbReference type="EMBL" id="CR861085">
    <property type="protein sequence ID" value="CAH93165.1"/>
    <property type="status" value="ALT_INIT"/>
    <property type="molecule type" value="mRNA"/>
</dbReference>
<dbReference type="SMR" id="Q5R501"/>
<dbReference type="FunCoup" id="Q5R501">
    <property type="interactions" value="3082"/>
</dbReference>
<dbReference type="STRING" id="9601.ENSPPYP00000002050"/>
<dbReference type="eggNOG" id="KOG2754">
    <property type="taxonomic scope" value="Eukaryota"/>
</dbReference>
<dbReference type="InParanoid" id="Q5R501"/>
<dbReference type="UniPathway" id="UPA00378"/>
<dbReference type="Proteomes" id="UP000001595">
    <property type="component" value="Unplaced"/>
</dbReference>
<dbReference type="GO" id="GO:0008250">
    <property type="term" value="C:oligosaccharyltransferase complex"/>
    <property type="evidence" value="ECO:0000250"/>
    <property type="project" value="UniProtKB"/>
</dbReference>
<dbReference type="GO" id="GO:0006486">
    <property type="term" value="P:protein glycosylation"/>
    <property type="evidence" value="ECO:0000250"/>
    <property type="project" value="UniProtKB"/>
</dbReference>
<dbReference type="GO" id="GO:0018279">
    <property type="term" value="P:protein N-linked glycosylation via asparagine"/>
    <property type="evidence" value="ECO:0007669"/>
    <property type="project" value="InterPro"/>
</dbReference>
<dbReference type="InterPro" id="IPR005013">
    <property type="entry name" value="DDOST_48_kDa_subunit"/>
</dbReference>
<dbReference type="InterPro" id="IPR055459">
    <property type="entry name" value="OST48_MD"/>
</dbReference>
<dbReference type="InterPro" id="IPR055457">
    <property type="entry name" value="OST48_N"/>
</dbReference>
<dbReference type="PANTHER" id="PTHR10830">
    <property type="entry name" value="DOLICHYL-DIPHOSPHOOLIGOSACCHARIDE--PROTEIN GLYCOSYLTRANSFERASE 48 KDA SUBUNIT"/>
    <property type="match status" value="1"/>
</dbReference>
<dbReference type="PANTHER" id="PTHR10830:SF0">
    <property type="entry name" value="DOLICHYL-DIPHOSPHOOLIGOSACCHARIDE--PROTEIN GLYCOSYLTRANSFERASE 48 KDA SUBUNIT"/>
    <property type="match status" value="1"/>
</dbReference>
<dbReference type="Pfam" id="PF23358">
    <property type="entry name" value="OST48_MD"/>
    <property type="match status" value="1"/>
</dbReference>
<dbReference type="Pfam" id="PF03345">
    <property type="entry name" value="OST48_N"/>
    <property type="match status" value="1"/>
</dbReference>
<name>OST48_PONAB</name>
<organism>
    <name type="scientific">Pongo abelii</name>
    <name type="common">Sumatran orangutan</name>
    <name type="synonym">Pongo pygmaeus abelii</name>
    <dbReference type="NCBI Taxonomy" id="9601"/>
    <lineage>
        <taxon>Eukaryota</taxon>
        <taxon>Metazoa</taxon>
        <taxon>Chordata</taxon>
        <taxon>Craniata</taxon>
        <taxon>Vertebrata</taxon>
        <taxon>Euteleostomi</taxon>
        <taxon>Mammalia</taxon>
        <taxon>Eutheria</taxon>
        <taxon>Euarchontoglires</taxon>
        <taxon>Primates</taxon>
        <taxon>Haplorrhini</taxon>
        <taxon>Catarrhini</taxon>
        <taxon>Hominidae</taxon>
        <taxon>Pongo</taxon>
    </lineage>
</organism>
<gene>
    <name evidence="2" type="primary">DDOST</name>
</gene>
<evidence type="ECO:0000250" key="1"/>
<evidence type="ECO:0000250" key="2">
    <source>
        <dbReference type="UniProtKB" id="P39656"/>
    </source>
</evidence>
<evidence type="ECO:0000250" key="3">
    <source>
        <dbReference type="UniProtKB" id="Q05052"/>
    </source>
</evidence>
<evidence type="ECO:0000250" key="4">
    <source>
        <dbReference type="UniProtKB" id="Q29381"/>
    </source>
</evidence>
<evidence type="ECO:0000255" key="5"/>
<evidence type="ECO:0000305" key="6"/>
<proteinExistence type="evidence at transcript level"/>
<feature type="signal peptide" evidence="1">
    <location>
        <begin position="1"/>
        <end position="26"/>
    </location>
</feature>
<feature type="chain" id="PRO_0000357446" description="Dolichyl-diphosphooligosaccharide--protein glycosyltransferase 48 kDa subunit">
    <location>
        <begin position="27"/>
        <end position="439"/>
    </location>
</feature>
<feature type="topological domain" description="Lumenal" evidence="5">
    <location>
        <begin position="27"/>
        <end position="410"/>
    </location>
</feature>
<feature type="transmembrane region" description="Helical" evidence="5">
    <location>
        <begin position="411"/>
        <end position="430"/>
    </location>
</feature>
<feature type="topological domain" description="Cytoplasmic" evidence="5">
    <location>
        <begin position="431"/>
        <end position="439"/>
    </location>
</feature>
<accession>Q5R501</accession>